<dbReference type="EMBL" id="AY360135">
    <property type="protein sequence ID" value="AAQ63680.1"/>
    <property type="molecule type" value="Genomic_DNA"/>
</dbReference>
<dbReference type="EMBL" id="AAFI02000056">
    <property type="protein sequence ID" value="EAL65576.1"/>
    <property type="molecule type" value="Genomic_DNA"/>
</dbReference>
<dbReference type="RefSeq" id="XP_638945.1">
    <property type="nucleotide sequence ID" value="XM_633853.1"/>
</dbReference>
<dbReference type="FunCoup" id="Q6UUW6">
    <property type="interactions" value="31"/>
</dbReference>
<dbReference type="PaxDb" id="44689-DDB0191432"/>
<dbReference type="EnsemblProtists" id="EAL65576">
    <property type="protein sequence ID" value="EAL65576"/>
    <property type="gene ID" value="DDB_G0283619"/>
</dbReference>
<dbReference type="GeneID" id="8624184"/>
<dbReference type="KEGG" id="ddi:DDB_G0283619"/>
<dbReference type="dictyBase" id="DDB_G0283619">
    <property type="gene designation" value="crlC"/>
</dbReference>
<dbReference type="VEuPathDB" id="AmoebaDB:DDB_G0283619"/>
<dbReference type="eggNOG" id="ENOG502QY50">
    <property type="taxonomic scope" value="Eukaryota"/>
</dbReference>
<dbReference type="HOGENOM" id="CLU_768205_0_0_1"/>
<dbReference type="InParanoid" id="Q6UUW6"/>
<dbReference type="OMA" id="FFWTTCI"/>
<dbReference type="PhylomeDB" id="Q6UUW6"/>
<dbReference type="PRO" id="PR:Q6UUW6"/>
<dbReference type="Proteomes" id="UP000002195">
    <property type="component" value="Chromosome 4"/>
</dbReference>
<dbReference type="GO" id="GO:0005886">
    <property type="term" value="C:plasma membrane"/>
    <property type="evidence" value="ECO:0000318"/>
    <property type="project" value="GO_Central"/>
</dbReference>
<dbReference type="GO" id="GO:0030552">
    <property type="term" value="F:cAMP binding"/>
    <property type="evidence" value="ECO:0007669"/>
    <property type="project" value="InterPro"/>
</dbReference>
<dbReference type="GO" id="GO:0001646">
    <property type="term" value="F:cAMP receptor activity"/>
    <property type="evidence" value="ECO:0000250"/>
    <property type="project" value="dictyBase"/>
</dbReference>
<dbReference type="GO" id="GO:0004930">
    <property type="term" value="F:G protein-coupled receptor activity"/>
    <property type="evidence" value="ECO:0000318"/>
    <property type="project" value="GO_Central"/>
</dbReference>
<dbReference type="GO" id="GO:0007189">
    <property type="term" value="P:adenylate cyclase-activating G protein-coupled receptor signaling pathway"/>
    <property type="evidence" value="ECO:0000318"/>
    <property type="project" value="GO_Central"/>
</dbReference>
<dbReference type="FunFam" id="1.20.1070.10:FF:000404">
    <property type="entry name" value="Cyclic AMP receptor-like protein A"/>
    <property type="match status" value="1"/>
</dbReference>
<dbReference type="Gene3D" id="1.20.1070.10">
    <property type="entry name" value="Rhodopsin 7-helix transmembrane proteins"/>
    <property type="match status" value="1"/>
</dbReference>
<dbReference type="InterPro" id="IPR017981">
    <property type="entry name" value="GPCR_2-like_7TM"/>
</dbReference>
<dbReference type="InterPro" id="IPR000848">
    <property type="entry name" value="GPCR_cAMP"/>
</dbReference>
<dbReference type="InterPro" id="IPR017452">
    <property type="entry name" value="GPCR_Rhodpsn_7TM"/>
</dbReference>
<dbReference type="PANTHER" id="PTHR23112:SF13">
    <property type="entry name" value="CYCLIC AMP RECEPTOR-LIKE PROTEIN C"/>
    <property type="match status" value="1"/>
</dbReference>
<dbReference type="PANTHER" id="PTHR23112">
    <property type="entry name" value="G PROTEIN-COUPLED RECEPTOR 157-RELATED"/>
    <property type="match status" value="1"/>
</dbReference>
<dbReference type="Pfam" id="PF05462">
    <property type="entry name" value="Dicty_CAR"/>
    <property type="match status" value="1"/>
</dbReference>
<dbReference type="PRINTS" id="PR00247">
    <property type="entry name" value="GPCRCAMP"/>
</dbReference>
<dbReference type="SUPFAM" id="SSF81321">
    <property type="entry name" value="Family A G protein-coupled receptor-like"/>
    <property type="match status" value="1"/>
</dbReference>
<dbReference type="PROSITE" id="PS50261">
    <property type="entry name" value="G_PROTEIN_RECEP_F2_4"/>
    <property type="match status" value="1"/>
</dbReference>
<protein>
    <recommendedName>
        <fullName>Cyclic AMP receptor-like protein C</fullName>
    </recommendedName>
</protein>
<proteinExistence type="evidence at transcript level"/>
<keyword id="KW-0297">G-protein coupled receptor</keyword>
<keyword id="KW-0472">Membrane</keyword>
<keyword id="KW-0675">Receptor</keyword>
<keyword id="KW-1185">Reference proteome</keyword>
<keyword id="KW-0807">Transducer</keyword>
<keyword id="KW-0812">Transmembrane</keyword>
<keyword id="KW-1133">Transmembrane helix</keyword>
<sequence>MGIEESQICNPSDREFLSVDILNIVTSSLSLMGSALTIISYIWKKVRRHRIQKQQIQQQQQQIEKGGLLSSSITIGNGSSHYGGIGGGGGSGNGTGIGAIGGPHGTYKQPTSKLPLLIFMLSIADFFTSFFIIISQSYLINNSKSYSTPYSPDLKIHFSPCIILRAIIQFFFLSTFFWTTCISYYLFHQLSSPGEEKYLLAIFNVVSWGIPFAISMVITMTNSIVVNSDGWCEVAKPMELSLWFLPLFLCLLVCSIYYFRLRRLFRSKFEYRLQINDRLKQLDSTISRRLTLYIVVFVICWLPDVIQHFISFFSKCTFFPLLILQNILTPSQGFWNFWIYSYTNKIARFTPSNDENKRLLQ</sequence>
<name>CRLC_DICDI</name>
<reference key="1">
    <citation type="journal article" date="2004" name="Dev. Biol.">
        <title>A cAMP receptor-like G protein-coupled receptor with roles in growth regulation and development.</title>
        <authorList>
            <person name="Raisley B."/>
            <person name="Zhang M."/>
            <person name="Hereld D."/>
            <person name="Hadwiger J.A."/>
        </authorList>
    </citation>
    <scope>NUCLEOTIDE SEQUENCE [GENOMIC DNA]</scope>
</reference>
<reference key="2">
    <citation type="journal article" date="2005" name="Nature">
        <title>The genome of the social amoeba Dictyostelium discoideum.</title>
        <authorList>
            <person name="Eichinger L."/>
            <person name="Pachebat J.A."/>
            <person name="Gloeckner G."/>
            <person name="Rajandream M.A."/>
            <person name="Sucgang R."/>
            <person name="Berriman M."/>
            <person name="Song J."/>
            <person name="Olsen R."/>
            <person name="Szafranski K."/>
            <person name="Xu Q."/>
            <person name="Tunggal B."/>
            <person name="Kummerfeld S."/>
            <person name="Madera M."/>
            <person name="Konfortov B.A."/>
            <person name="Rivero F."/>
            <person name="Bankier A.T."/>
            <person name="Lehmann R."/>
            <person name="Hamlin N."/>
            <person name="Davies R."/>
            <person name="Gaudet P."/>
            <person name="Fey P."/>
            <person name="Pilcher K."/>
            <person name="Chen G."/>
            <person name="Saunders D."/>
            <person name="Sodergren E.J."/>
            <person name="Davis P."/>
            <person name="Kerhornou A."/>
            <person name="Nie X."/>
            <person name="Hall N."/>
            <person name="Anjard C."/>
            <person name="Hemphill L."/>
            <person name="Bason N."/>
            <person name="Farbrother P."/>
            <person name="Desany B."/>
            <person name="Just E."/>
            <person name="Morio T."/>
            <person name="Rost R."/>
            <person name="Churcher C.M."/>
            <person name="Cooper J."/>
            <person name="Haydock S."/>
            <person name="van Driessche N."/>
            <person name="Cronin A."/>
            <person name="Goodhead I."/>
            <person name="Muzny D.M."/>
            <person name="Mourier T."/>
            <person name="Pain A."/>
            <person name="Lu M."/>
            <person name="Harper D."/>
            <person name="Lindsay R."/>
            <person name="Hauser H."/>
            <person name="James K.D."/>
            <person name="Quiles M."/>
            <person name="Madan Babu M."/>
            <person name="Saito T."/>
            <person name="Buchrieser C."/>
            <person name="Wardroper A."/>
            <person name="Felder M."/>
            <person name="Thangavelu M."/>
            <person name="Johnson D."/>
            <person name="Knights A."/>
            <person name="Loulseged H."/>
            <person name="Mungall K.L."/>
            <person name="Oliver K."/>
            <person name="Price C."/>
            <person name="Quail M.A."/>
            <person name="Urushihara H."/>
            <person name="Hernandez J."/>
            <person name="Rabbinowitsch E."/>
            <person name="Steffen D."/>
            <person name="Sanders M."/>
            <person name="Ma J."/>
            <person name="Kohara Y."/>
            <person name="Sharp S."/>
            <person name="Simmonds M.N."/>
            <person name="Spiegler S."/>
            <person name="Tivey A."/>
            <person name="Sugano S."/>
            <person name="White B."/>
            <person name="Walker D."/>
            <person name="Woodward J.R."/>
            <person name="Winckler T."/>
            <person name="Tanaka Y."/>
            <person name="Shaulsky G."/>
            <person name="Schleicher M."/>
            <person name="Weinstock G.M."/>
            <person name="Rosenthal A."/>
            <person name="Cox E.C."/>
            <person name="Chisholm R.L."/>
            <person name="Gibbs R.A."/>
            <person name="Loomis W.F."/>
            <person name="Platzer M."/>
            <person name="Kay R.R."/>
            <person name="Williams J.G."/>
            <person name="Dear P.H."/>
            <person name="Noegel A.A."/>
            <person name="Barrell B.G."/>
            <person name="Kuspa A."/>
        </authorList>
    </citation>
    <scope>NUCLEOTIDE SEQUENCE [LARGE SCALE GENOMIC DNA]</scope>
    <source>
        <strain>AX4</strain>
    </source>
</reference>
<reference key="3">
    <citation type="journal article" date="2006" name="Eur. J. Cell Biol.">
        <title>The Dictyostelium repertoire of seven transmembrane domain receptors.</title>
        <authorList>
            <person name="Prabhu Y."/>
            <person name="Eichinger L."/>
        </authorList>
    </citation>
    <scope>NOMENCLATURE</scope>
</reference>
<feature type="chain" id="PRO_0000327676" description="Cyclic AMP receptor-like protein C">
    <location>
        <begin position="1"/>
        <end position="361"/>
    </location>
</feature>
<feature type="topological domain" description="Extracellular" evidence="2">
    <location>
        <begin position="1"/>
        <end position="18"/>
    </location>
</feature>
<feature type="transmembrane region" description="Helical; Name=1" evidence="2">
    <location>
        <begin position="19"/>
        <end position="39"/>
    </location>
</feature>
<feature type="topological domain" description="Cytoplasmic" evidence="2">
    <location>
        <begin position="40"/>
        <end position="113"/>
    </location>
</feature>
<feature type="transmembrane region" description="Helical; Name=2" evidence="2">
    <location>
        <begin position="114"/>
        <end position="134"/>
    </location>
</feature>
<feature type="topological domain" description="Extracellular" evidence="2">
    <location>
        <begin position="135"/>
        <end position="166"/>
    </location>
</feature>
<feature type="transmembrane region" description="Helical; Name=3" evidence="2">
    <location>
        <begin position="167"/>
        <end position="187"/>
    </location>
</feature>
<feature type="topological domain" description="Cytoplasmic" evidence="2">
    <location>
        <begin position="188"/>
        <end position="197"/>
    </location>
</feature>
<feature type="transmembrane region" description="Helical; Name=4" evidence="2">
    <location>
        <begin position="198"/>
        <end position="218"/>
    </location>
</feature>
<feature type="topological domain" description="Extracellular" evidence="2">
    <location>
        <begin position="219"/>
        <end position="238"/>
    </location>
</feature>
<feature type="transmembrane region" description="Helical; Name=5" evidence="2">
    <location>
        <begin position="239"/>
        <end position="259"/>
    </location>
</feature>
<feature type="topological domain" description="Cytoplasmic" evidence="2">
    <location>
        <begin position="260"/>
        <end position="292"/>
    </location>
</feature>
<feature type="transmembrane region" description="Helical; Name=6" evidence="2">
    <location>
        <begin position="293"/>
        <end position="313"/>
    </location>
</feature>
<feature type="topological domain" description="Extracellular" evidence="2">
    <location>
        <begin position="314"/>
        <end position="318"/>
    </location>
</feature>
<feature type="transmembrane region" description="Helical; Name=7" evidence="2">
    <location>
        <begin position="319"/>
        <end position="339"/>
    </location>
</feature>
<feature type="topological domain" description="Cytoplasmic" evidence="2">
    <location>
        <begin position="340"/>
        <end position="361"/>
    </location>
</feature>
<organism>
    <name type="scientific">Dictyostelium discoideum</name>
    <name type="common">Social amoeba</name>
    <dbReference type="NCBI Taxonomy" id="44689"/>
    <lineage>
        <taxon>Eukaryota</taxon>
        <taxon>Amoebozoa</taxon>
        <taxon>Evosea</taxon>
        <taxon>Eumycetozoa</taxon>
        <taxon>Dictyostelia</taxon>
        <taxon>Dictyosteliales</taxon>
        <taxon>Dictyosteliaceae</taxon>
        <taxon>Dictyostelium</taxon>
    </lineage>
</organism>
<gene>
    <name type="primary">crlC</name>
    <name type="ORF">DDB_G0283619</name>
</gene>
<accession>Q6UUW6</accession>
<accession>Q54QS8</accession>
<evidence type="ECO:0000250" key="1"/>
<evidence type="ECO:0000255" key="2"/>
<evidence type="ECO:0000305" key="3"/>
<comment type="function">
    <text evidence="1">Receptor for cAMP.</text>
</comment>
<comment type="subcellular location">
    <subcellularLocation>
        <location evidence="3">Membrane</location>
        <topology evidence="3">Multi-pass membrane protein</topology>
    </subcellularLocation>
</comment>
<comment type="developmental stage">
    <text>Present in growing cells but is undetectable after 4 hours of starvation.</text>
</comment>
<comment type="similarity">
    <text evidence="3">Belongs to the G-protein coupled receptor 5 family.</text>
</comment>